<comment type="catalytic activity">
    <reaction evidence="1">
        <text>1-(5-phospho-beta-D-ribosyl)-ATP + H2O = 1-(5-phospho-beta-D-ribosyl)-5'-AMP + diphosphate + H(+)</text>
        <dbReference type="Rhea" id="RHEA:22828"/>
        <dbReference type="ChEBI" id="CHEBI:15377"/>
        <dbReference type="ChEBI" id="CHEBI:15378"/>
        <dbReference type="ChEBI" id="CHEBI:33019"/>
        <dbReference type="ChEBI" id="CHEBI:59457"/>
        <dbReference type="ChEBI" id="CHEBI:73183"/>
        <dbReference type="EC" id="3.6.1.31"/>
    </reaction>
</comment>
<comment type="pathway">
    <text evidence="1">Amino-acid biosynthesis; L-histidine biosynthesis; L-histidine from 5-phospho-alpha-D-ribose 1-diphosphate: step 2/9.</text>
</comment>
<comment type="subcellular location">
    <subcellularLocation>
        <location evidence="1">Cytoplasm</location>
    </subcellularLocation>
</comment>
<comment type="similarity">
    <text evidence="1">Belongs to the PRA-PH family.</text>
</comment>
<name>HIS2_MAGMM</name>
<accession>A0LCF5</accession>
<organism>
    <name type="scientific">Magnetococcus marinus (strain ATCC BAA-1437 / JCM 17883 / MC-1)</name>
    <dbReference type="NCBI Taxonomy" id="156889"/>
    <lineage>
        <taxon>Bacteria</taxon>
        <taxon>Pseudomonadati</taxon>
        <taxon>Pseudomonadota</taxon>
        <taxon>Alphaproteobacteria</taxon>
        <taxon>Magnetococcales</taxon>
        <taxon>Magnetococcaceae</taxon>
        <taxon>Magnetococcus</taxon>
    </lineage>
</organism>
<gene>
    <name evidence="1" type="primary">hisE</name>
    <name type="ordered locus">Mmc1_3158</name>
</gene>
<sequence>MNNLSPPSTVDILEQVYQVIQQRKSAPDPEASYVAKLFHKGDDAILKKVGEEATELVLAIKGRAARNEVAHEAADLIFHTLVGLAIMNIPPTEVMNVLSSRFGKTGLTRNQTPSVELEPSRRQFERRLHSKTIHLIFSSGITIDGLTRDISLDGMQLHVDYADKVRLLGEKGYFELSVQNKATFNANNLLVGLEIPTTMDNNPLMAAVHSARTYRFEFEIVRVTEDAIGLRIIGDKGMFSFALANEVFNDLM</sequence>
<dbReference type="EC" id="3.6.1.31" evidence="1"/>
<dbReference type="EMBL" id="CP000471">
    <property type="protein sequence ID" value="ABK45648.1"/>
    <property type="molecule type" value="Genomic_DNA"/>
</dbReference>
<dbReference type="SMR" id="A0LCF5"/>
<dbReference type="STRING" id="156889.Mmc1_3158"/>
<dbReference type="KEGG" id="mgm:Mmc1_3158"/>
<dbReference type="eggNOG" id="COG0140">
    <property type="taxonomic scope" value="Bacteria"/>
</dbReference>
<dbReference type="HOGENOM" id="CLU_1101814_0_0_5"/>
<dbReference type="OrthoDB" id="9814738at2"/>
<dbReference type="UniPathway" id="UPA00031">
    <property type="reaction ID" value="UER00007"/>
</dbReference>
<dbReference type="Proteomes" id="UP000002586">
    <property type="component" value="Chromosome"/>
</dbReference>
<dbReference type="GO" id="GO:0005737">
    <property type="term" value="C:cytoplasm"/>
    <property type="evidence" value="ECO:0007669"/>
    <property type="project" value="UniProtKB-SubCell"/>
</dbReference>
<dbReference type="GO" id="GO:0005524">
    <property type="term" value="F:ATP binding"/>
    <property type="evidence" value="ECO:0007669"/>
    <property type="project" value="UniProtKB-KW"/>
</dbReference>
<dbReference type="GO" id="GO:0004636">
    <property type="term" value="F:phosphoribosyl-ATP diphosphatase activity"/>
    <property type="evidence" value="ECO:0007669"/>
    <property type="project" value="UniProtKB-UniRule"/>
</dbReference>
<dbReference type="GO" id="GO:0000105">
    <property type="term" value="P:L-histidine biosynthetic process"/>
    <property type="evidence" value="ECO:0007669"/>
    <property type="project" value="UniProtKB-UniRule"/>
</dbReference>
<dbReference type="CDD" id="cd11534">
    <property type="entry name" value="NTP-PPase_HisIE_like"/>
    <property type="match status" value="1"/>
</dbReference>
<dbReference type="Gene3D" id="1.10.287.1080">
    <property type="entry name" value="MazG-like"/>
    <property type="match status" value="1"/>
</dbReference>
<dbReference type="HAMAP" id="MF_01020">
    <property type="entry name" value="HisE"/>
    <property type="match status" value="1"/>
</dbReference>
<dbReference type="InterPro" id="IPR008179">
    <property type="entry name" value="HisE"/>
</dbReference>
<dbReference type="InterPro" id="IPR021130">
    <property type="entry name" value="PRib-ATP_PPHydrolase-like"/>
</dbReference>
<dbReference type="NCBIfam" id="TIGR03188">
    <property type="entry name" value="histidine_hisI"/>
    <property type="match status" value="1"/>
</dbReference>
<dbReference type="NCBIfam" id="NF001611">
    <property type="entry name" value="PRK00400.1-3"/>
    <property type="match status" value="1"/>
</dbReference>
<dbReference type="PANTHER" id="PTHR42945">
    <property type="entry name" value="HISTIDINE BIOSYNTHESIS BIFUNCTIONAL PROTEIN"/>
    <property type="match status" value="1"/>
</dbReference>
<dbReference type="PANTHER" id="PTHR42945:SF9">
    <property type="entry name" value="HISTIDINE BIOSYNTHESIS BIFUNCTIONAL PROTEIN HISIE"/>
    <property type="match status" value="1"/>
</dbReference>
<dbReference type="Pfam" id="PF01503">
    <property type="entry name" value="PRA-PH"/>
    <property type="match status" value="1"/>
</dbReference>
<dbReference type="SUPFAM" id="SSF101386">
    <property type="entry name" value="all-alpha NTP pyrophosphatases"/>
    <property type="match status" value="1"/>
</dbReference>
<feature type="chain" id="PRO_0000319651" description="Phosphoribosyl-ATP pyrophosphatase">
    <location>
        <begin position="1"/>
        <end position="252"/>
    </location>
</feature>
<reference key="1">
    <citation type="journal article" date="2009" name="Appl. Environ. Microbiol.">
        <title>Complete genome sequence of the chemolithoautotrophic marine magnetotactic coccus strain MC-1.</title>
        <authorList>
            <person name="Schubbe S."/>
            <person name="Williams T.J."/>
            <person name="Xie G."/>
            <person name="Kiss H.E."/>
            <person name="Brettin T.S."/>
            <person name="Martinez D."/>
            <person name="Ross C.A."/>
            <person name="Schuler D."/>
            <person name="Cox B.L."/>
            <person name="Nealson K.H."/>
            <person name="Bazylinski D.A."/>
        </authorList>
    </citation>
    <scope>NUCLEOTIDE SEQUENCE [LARGE SCALE GENOMIC DNA]</scope>
    <source>
        <strain>ATCC BAA-1437 / JCM 17883 / MC-1</strain>
    </source>
</reference>
<evidence type="ECO:0000255" key="1">
    <source>
        <dbReference type="HAMAP-Rule" id="MF_01020"/>
    </source>
</evidence>
<proteinExistence type="inferred from homology"/>
<keyword id="KW-0028">Amino-acid biosynthesis</keyword>
<keyword id="KW-0067">ATP-binding</keyword>
<keyword id="KW-0963">Cytoplasm</keyword>
<keyword id="KW-0368">Histidine biosynthesis</keyword>
<keyword id="KW-0378">Hydrolase</keyword>
<keyword id="KW-0547">Nucleotide-binding</keyword>
<keyword id="KW-1185">Reference proteome</keyword>
<protein>
    <recommendedName>
        <fullName evidence="1">Phosphoribosyl-ATP pyrophosphatase</fullName>
        <shortName evidence="1">PRA-PH</shortName>
        <ecNumber evidence="1">3.6.1.31</ecNumber>
    </recommendedName>
</protein>